<keyword id="KW-0040">ANK repeat</keyword>
<keyword id="KW-0472">Membrane</keyword>
<keyword id="KW-0597">Phosphoprotein</keyword>
<keyword id="KW-1185">Reference proteome</keyword>
<keyword id="KW-0677">Repeat</keyword>
<keyword id="KW-0812">Transmembrane</keyword>
<keyword id="KW-1133">Transmembrane helix</keyword>
<feature type="chain" id="PRO_0000067074" description="Protein MGA2">
    <location>
        <begin position="1"/>
        <end position="1113"/>
    </location>
</feature>
<feature type="transmembrane region" description="Helical" evidence="1">
    <location>
        <begin position="1037"/>
        <end position="1054"/>
    </location>
</feature>
<feature type="domain" description="IPT/TIG">
    <location>
        <begin position="530"/>
        <end position="610"/>
    </location>
</feature>
<feature type="repeat" description="ANK 1">
    <location>
        <begin position="719"/>
        <end position="748"/>
    </location>
</feature>
<feature type="repeat" description="ANK 2">
    <location>
        <begin position="752"/>
        <end position="781"/>
    </location>
</feature>
<feature type="region of interest" description="Disordered" evidence="2">
    <location>
        <begin position="91"/>
        <end position="114"/>
    </location>
</feature>
<feature type="region of interest" description="Disordered" evidence="2">
    <location>
        <begin position="344"/>
        <end position="376"/>
    </location>
</feature>
<feature type="region of interest" description="Disordered" evidence="2">
    <location>
        <begin position="437"/>
        <end position="462"/>
    </location>
</feature>
<feature type="region of interest" description="Disordered" evidence="2">
    <location>
        <begin position="658"/>
        <end position="687"/>
    </location>
</feature>
<feature type="compositionally biased region" description="Polar residues" evidence="2">
    <location>
        <begin position="344"/>
        <end position="357"/>
    </location>
</feature>
<feature type="compositionally biased region" description="Polar residues" evidence="2">
    <location>
        <begin position="437"/>
        <end position="452"/>
    </location>
</feature>
<feature type="compositionally biased region" description="Polar residues" evidence="2">
    <location>
        <begin position="663"/>
        <end position="687"/>
    </location>
</feature>
<feature type="modified residue" description="Phosphoserine" evidence="6">
    <location>
        <position position="255"/>
    </location>
</feature>
<feature type="modified residue" description="Phosphoserine" evidence="5">
    <location>
        <position position="467"/>
    </location>
</feature>
<protein>
    <recommendedName>
        <fullName>Protein MGA2</fullName>
    </recommendedName>
</protein>
<gene>
    <name type="primary">MGA2</name>
    <name type="ordered locus">YIR033W</name>
</gene>
<accession>P40578</accession>
<accession>D6VVW4</accession>
<proteinExistence type="evidence at protein level"/>
<dbReference type="EMBL" id="Z38061">
    <property type="protein sequence ID" value="CAA86193.1"/>
    <property type="molecule type" value="Genomic_DNA"/>
</dbReference>
<dbReference type="EMBL" id="BK006942">
    <property type="protein sequence ID" value="DAA08580.1"/>
    <property type="molecule type" value="Genomic_DNA"/>
</dbReference>
<dbReference type="PIR" id="S48495">
    <property type="entry name" value="S48495"/>
</dbReference>
<dbReference type="RefSeq" id="NP_012299.1">
    <property type="nucleotide sequence ID" value="NM_001179555.1"/>
</dbReference>
<dbReference type="SMR" id="P40578"/>
<dbReference type="BioGRID" id="35024">
    <property type="interactions" value="523"/>
</dbReference>
<dbReference type="DIP" id="DIP-6689N"/>
<dbReference type="FunCoup" id="P40578">
    <property type="interactions" value="1200"/>
</dbReference>
<dbReference type="IntAct" id="P40578">
    <property type="interactions" value="23"/>
</dbReference>
<dbReference type="MINT" id="P40578"/>
<dbReference type="STRING" id="4932.YIR033W"/>
<dbReference type="iPTMnet" id="P40578"/>
<dbReference type="PaxDb" id="4932-YIR033W"/>
<dbReference type="PeptideAtlas" id="P40578"/>
<dbReference type="EnsemblFungi" id="YIR033W_mRNA">
    <property type="protein sequence ID" value="YIR033W"/>
    <property type="gene ID" value="YIR033W"/>
</dbReference>
<dbReference type="GeneID" id="854851"/>
<dbReference type="KEGG" id="sce:YIR033W"/>
<dbReference type="AGR" id="SGD:S000001472"/>
<dbReference type="SGD" id="S000001472">
    <property type="gene designation" value="MGA2"/>
</dbReference>
<dbReference type="VEuPathDB" id="FungiDB:YIR033W"/>
<dbReference type="eggNOG" id="KOG3836">
    <property type="taxonomic scope" value="Eukaryota"/>
</dbReference>
<dbReference type="HOGENOM" id="CLU_004311_0_0_1"/>
<dbReference type="InParanoid" id="P40578"/>
<dbReference type="OMA" id="HNERIGF"/>
<dbReference type="OrthoDB" id="71307at2759"/>
<dbReference type="BioCyc" id="YEAST:G3O-31448-MONOMER"/>
<dbReference type="BioGRID-ORCS" id="854851">
    <property type="hits" value="1 hit in 10 CRISPR screens"/>
</dbReference>
<dbReference type="PRO" id="PR:P40578"/>
<dbReference type="Proteomes" id="UP000002311">
    <property type="component" value="Chromosome IX"/>
</dbReference>
<dbReference type="RNAct" id="P40578">
    <property type="molecule type" value="protein"/>
</dbReference>
<dbReference type="GO" id="GO:0005783">
    <property type="term" value="C:endoplasmic reticulum"/>
    <property type="evidence" value="ECO:0007005"/>
    <property type="project" value="SGD"/>
</dbReference>
<dbReference type="GO" id="GO:0005789">
    <property type="term" value="C:endoplasmic reticulum membrane"/>
    <property type="evidence" value="ECO:0000314"/>
    <property type="project" value="SGD"/>
</dbReference>
<dbReference type="GO" id="GO:0005634">
    <property type="term" value="C:nucleus"/>
    <property type="evidence" value="ECO:0000314"/>
    <property type="project" value="SGD"/>
</dbReference>
<dbReference type="GO" id="GO:0106254">
    <property type="term" value="F:lipid sensor activity"/>
    <property type="evidence" value="ECO:0000314"/>
    <property type="project" value="SGD"/>
</dbReference>
<dbReference type="GO" id="GO:0071279">
    <property type="term" value="P:cellular response to cobalt ion"/>
    <property type="evidence" value="ECO:0000315"/>
    <property type="project" value="SGD"/>
</dbReference>
<dbReference type="GO" id="GO:0071456">
    <property type="term" value="P:cellular response to hypoxia"/>
    <property type="evidence" value="ECO:0000315"/>
    <property type="project" value="SGD"/>
</dbReference>
<dbReference type="GO" id="GO:0010106">
    <property type="term" value="P:cellular response to iron ion starvation"/>
    <property type="evidence" value="ECO:0000315"/>
    <property type="project" value="SGD"/>
</dbReference>
<dbReference type="GO" id="GO:0048255">
    <property type="term" value="P:mRNA stabilization"/>
    <property type="evidence" value="ECO:0000315"/>
    <property type="project" value="SGD"/>
</dbReference>
<dbReference type="GO" id="GO:0045944">
    <property type="term" value="P:positive regulation of transcription by RNA polymerase II"/>
    <property type="evidence" value="ECO:0000315"/>
    <property type="project" value="SGD"/>
</dbReference>
<dbReference type="GO" id="GO:2001280">
    <property type="term" value="P:positive regulation of unsaturated fatty acid biosynthetic process"/>
    <property type="evidence" value="ECO:0000316"/>
    <property type="project" value="SGD"/>
</dbReference>
<dbReference type="GO" id="GO:0030466">
    <property type="term" value="P:silent mating-type cassette heterochromatin formation"/>
    <property type="evidence" value="ECO:0000316"/>
    <property type="project" value="SGD"/>
</dbReference>
<dbReference type="CDD" id="cd00102">
    <property type="entry name" value="IPT"/>
    <property type="match status" value="1"/>
</dbReference>
<dbReference type="FunFam" id="2.60.40.10:FF:001880">
    <property type="entry name" value="Mga2p"/>
    <property type="match status" value="1"/>
</dbReference>
<dbReference type="Gene3D" id="1.25.40.20">
    <property type="entry name" value="Ankyrin repeat-containing domain"/>
    <property type="match status" value="1"/>
</dbReference>
<dbReference type="Gene3D" id="2.60.40.10">
    <property type="entry name" value="Immunoglobulins"/>
    <property type="match status" value="1"/>
</dbReference>
<dbReference type="InterPro" id="IPR002110">
    <property type="entry name" value="Ankyrin_rpt"/>
</dbReference>
<dbReference type="InterPro" id="IPR036770">
    <property type="entry name" value="Ankyrin_rpt-contain_sf"/>
</dbReference>
<dbReference type="InterPro" id="IPR050889">
    <property type="entry name" value="Dendritic_Spine_Reg/Scaffold"/>
</dbReference>
<dbReference type="InterPro" id="IPR013783">
    <property type="entry name" value="Ig-like_fold"/>
</dbReference>
<dbReference type="InterPro" id="IPR014756">
    <property type="entry name" value="Ig_E-set"/>
</dbReference>
<dbReference type="InterPro" id="IPR002909">
    <property type="entry name" value="IPT_dom"/>
</dbReference>
<dbReference type="PANTHER" id="PTHR24166:SF48">
    <property type="entry name" value="PROTEIN VAPYRIN"/>
    <property type="match status" value="1"/>
</dbReference>
<dbReference type="PANTHER" id="PTHR24166">
    <property type="entry name" value="ROLLING PEBBLES, ISOFORM B"/>
    <property type="match status" value="1"/>
</dbReference>
<dbReference type="Pfam" id="PF12796">
    <property type="entry name" value="Ank_2"/>
    <property type="match status" value="1"/>
</dbReference>
<dbReference type="Pfam" id="PF01833">
    <property type="entry name" value="TIG"/>
    <property type="match status" value="1"/>
</dbReference>
<dbReference type="SMART" id="SM00248">
    <property type="entry name" value="ANK"/>
    <property type="match status" value="2"/>
</dbReference>
<dbReference type="SMART" id="SM00429">
    <property type="entry name" value="IPT"/>
    <property type="match status" value="1"/>
</dbReference>
<dbReference type="SUPFAM" id="SSF48403">
    <property type="entry name" value="Ankyrin repeat"/>
    <property type="match status" value="1"/>
</dbReference>
<dbReference type="SUPFAM" id="SSF81296">
    <property type="entry name" value="E set domains"/>
    <property type="match status" value="1"/>
</dbReference>
<dbReference type="PROSITE" id="PS50297">
    <property type="entry name" value="ANK_REP_REGION"/>
    <property type="match status" value="1"/>
</dbReference>
<dbReference type="PROSITE" id="PS50088">
    <property type="entry name" value="ANK_REPEAT"/>
    <property type="match status" value="2"/>
</dbReference>
<comment type="subcellular location">
    <subcellularLocation>
        <location evidence="4">Membrane</location>
        <topology evidence="4">Single-pass membrane protein</topology>
    </subcellularLocation>
</comment>
<comment type="miscellaneous">
    <text evidence="3">Present with 300 molecules/cell in log phase SD medium.</text>
</comment>
<name>MGA2_YEAST</name>
<organism>
    <name type="scientific">Saccharomyces cerevisiae (strain ATCC 204508 / S288c)</name>
    <name type="common">Baker's yeast</name>
    <dbReference type="NCBI Taxonomy" id="559292"/>
    <lineage>
        <taxon>Eukaryota</taxon>
        <taxon>Fungi</taxon>
        <taxon>Dikarya</taxon>
        <taxon>Ascomycota</taxon>
        <taxon>Saccharomycotina</taxon>
        <taxon>Saccharomycetes</taxon>
        <taxon>Saccharomycetales</taxon>
        <taxon>Saccharomycetaceae</taxon>
        <taxon>Saccharomyces</taxon>
    </lineage>
</organism>
<reference key="1">
    <citation type="journal article" date="1997" name="Nature">
        <title>The nucleotide sequence of Saccharomyces cerevisiae chromosome IX.</title>
        <authorList>
            <person name="Churcher C.M."/>
            <person name="Bowman S."/>
            <person name="Badcock K."/>
            <person name="Bankier A.T."/>
            <person name="Brown D."/>
            <person name="Chillingworth T."/>
            <person name="Connor R."/>
            <person name="Devlin K."/>
            <person name="Gentles S."/>
            <person name="Hamlin N."/>
            <person name="Harris D.E."/>
            <person name="Horsnell T."/>
            <person name="Hunt S."/>
            <person name="Jagels K."/>
            <person name="Jones M."/>
            <person name="Lye G."/>
            <person name="Moule S."/>
            <person name="Odell C."/>
            <person name="Pearson D."/>
            <person name="Rajandream M.A."/>
            <person name="Rice P."/>
            <person name="Rowley N."/>
            <person name="Skelton J."/>
            <person name="Smith V."/>
            <person name="Walsh S.V."/>
            <person name="Whitehead S."/>
            <person name="Barrell B.G."/>
        </authorList>
    </citation>
    <scope>NUCLEOTIDE SEQUENCE [LARGE SCALE GENOMIC DNA]</scope>
    <source>
        <strain>ATCC 204508 / S288c</strain>
    </source>
</reference>
<reference key="2">
    <citation type="journal article" date="2014" name="G3 (Bethesda)">
        <title>The reference genome sequence of Saccharomyces cerevisiae: Then and now.</title>
        <authorList>
            <person name="Engel S.R."/>
            <person name="Dietrich F.S."/>
            <person name="Fisk D.G."/>
            <person name="Binkley G."/>
            <person name="Balakrishnan R."/>
            <person name="Costanzo M.C."/>
            <person name="Dwight S.S."/>
            <person name="Hitz B.C."/>
            <person name="Karra K."/>
            <person name="Nash R.S."/>
            <person name="Weng S."/>
            <person name="Wong E.D."/>
            <person name="Lloyd P."/>
            <person name="Skrzypek M.S."/>
            <person name="Miyasato S.R."/>
            <person name="Simison M."/>
            <person name="Cherry J.M."/>
        </authorList>
    </citation>
    <scope>GENOME REANNOTATION</scope>
    <source>
        <strain>ATCC 204508 / S288c</strain>
    </source>
</reference>
<reference key="3">
    <citation type="journal article" date="2003" name="Nature">
        <title>Global analysis of protein expression in yeast.</title>
        <authorList>
            <person name="Ghaemmaghami S."/>
            <person name="Huh W.-K."/>
            <person name="Bower K."/>
            <person name="Howson R.W."/>
            <person name="Belle A."/>
            <person name="Dephoure N."/>
            <person name="O'Shea E.K."/>
            <person name="Weissman J.S."/>
        </authorList>
    </citation>
    <scope>LEVEL OF PROTEIN EXPRESSION [LARGE SCALE ANALYSIS]</scope>
</reference>
<reference key="4">
    <citation type="journal article" date="2005" name="Mol. Cell. Proteomics">
        <title>Quantitative phosphoproteomics applied to the yeast pheromone signaling pathway.</title>
        <authorList>
            <person name="Gruhler A."/>
            <person name="Olsen J.V."/>
            <person name="Mohammed S."/>
            <person name="Mortensen P."/>
            <person name="Faergeman N.J."/>
            <person name="Mann M."/>
            <person name="Jensen O.N."/>
        </authorList>
    </citation>
    <scope>PHOSPHORYLATION [LARGE SCALE ANALYSIS] AT SER-467</scope>
    <scope>IDENTIFICATION BY MASS SPECTROMETRY [LARGE SCALE ANALYSIS]</scope>
    <source>
        <strain>YAL6B</strain>
    </source>
</reference>
<reference key="5">
    <citation type="journal article" date="2008" name="Mol. Cell. Proteomics">
        <title>A multidimensional chromatography technology for in-depth phosphoproteome analysis.</title>
        <authorList>
            <person name="Albuquerque C.P."/>
            <person name="Smolka M.B."/>
            <person name="Payne S.H."/>
            <person name="Bafna V."/>
            <person name="Eng J."/>
            <person name="Zhou H."/>
        </authorList>
    </citation>
    <scope>IDENTIFICATION BY MASS SPECTROMETRY [LARGE SCALE ANALYSIS]</scope>
</reference>
<reference key="6">
    <citation type="journal article" date="2009" name="Science">
        <title>Global analysis of Cdk1 substrate phosphorylation sites provides insights into evolution.</title>
        <authorList>
            <person name="Holt L.J."/>
            <person name="Tuch B.B."/>
            <person name="Villen J."/>
            <person name="Johnson A.D."/>
            <person name="Gygi S.P."/>
            <person name="Morgan D.O."/>
        </authorList>
    </citation>
    <scope>PHOSPHORYLATION [LARGE SCALE ANALYSIS] AT SER-255</scope>
    <scope>IDENTIFICATION BY MASS SPECTROMETRY [LARGE SCALE ANALYSIS]</scope>
</reference>
<sequence>MQQNSEFLTETPGSDPHISQLHANSVMESQLLDDFLLNGSPMYQDDSMAHINIDEGANFQNFIKTDEGDSPNLLSFEGIGNNTHVNQNVSTPLEEEMESNRALKEEEEDEHENKVFNEKNIGNPAHDEIVFGRKETIQSVYINPLDYLKVNAAQLPLDVEVSGLPQVSRVENQLKLKVKITSETPLNQSMLYLPSDSISREKFYLKKNIEDFSEDFKKNLLYINAFVLCAVSNRTTNVCTKCVKREQRRAARRKSGIADNLLWCNNINRRLVVFNNKQVFPIMKTFDNVKEFELTTRLVCYCRHHKANNGFVILFTITDWQNRLLGKFTTTPIMITDRKPANMDTTKFNNTTTSSRRQLTEEESTTEYYSTDNNQLSKDENMPFQYTYQHNPYDNDSQMNNIPLKDKNVPFPYSISQQTDLLQNNNLSLNLSLPNQHIPSPTSMSEEGSESFNYHHRDNDNPVRTISLTNIEQQSQLNQRKRARNNLENDIGKPLFKHSFSNSISATNTMNPALHSMQDFSMKNNNNNLPSINRVIPSQGPINGGIEVTLLGCNFKDGLSVKFGSNLALSTQCWSETTIVTYLPPAAYAGQVFVSITDTNNENNNDDLPQEIEINDNKKAIFTYVDDTDRQLIELALQIVGLKMNGKLEDARNIAKRIVGNDSPDSGTNGNSCSKSTGPSPNQHSMNLNTSVLYSDEVLIQKVIKSLNINSNISICDSLGRTLLHLACLKNYSSLVYTLIKKGARVNDIDSFGLTPLHFACISGDPKIIKMLLNCKVNYSLRSHNGLTAREVFIANHIHSKEIDKKQDNRDNHKFVHNDTYISEVLSLFEEFQNGTKFTDSVETDSNYSISRKYSQSSFNSSLLDNESLNENLFESQSMINPTSMEIQHPTLQLFENSSYSEYDQSDFEEDGDEDLFVTDEVEKPGVACREEQSELLDIGSSANEPEEDNGSTSLWNRVLHRINDDLPKYEDLFPLSWGKDDKLKTTNQDSIVEQSASNIENSENSEEEDYEEEEEFLKKQFNRFFQNKQNFRNDKMLIFFWIPLTLLLLTWFIMYKFGNQDSSINHISELISEYLRIALAKFLLGNERMKTAFRSKLSNLQTTRMLNDLIVS</sequence>
<evidence type="ECO:0000255" key="1"/>
<evidence type="ECO:0000256" key="2">
    <source>
        <dbReference type="SAM" id="MobiDB-lite"/>
    </source>
</evidence>
<evidence type="ECO:0000269" key="3">
    <source>
    </source>
</evidence>
<evidence type="ECO:0000305" key="4"/>
<evidence type="ECO:0007744" key="5">
    <source>
    </source>
</evidence>
<evidence type="ECO:0007744" key="6">
    <source>
    </source>
</evidence>